<name>NB1_MYCS2</name>
<evidence type="ECO:0000255" key="1">
    <source>
        <dbReference type="HAMAP-Rule" id="MF_01297"/>
    </source>
</evidence>
<dbReference type="EC" id="5.99.-.-" evidence="1"/>
<dbReference type="EMBL" id="CP000480">
    <property type="protein sequence ID" value="ABK71585.1"/>
    <property type="molecule type" value="Genomic_DNA"/>
</dbReference>
<dbReference type="EMBL" id="CP001663">
    <property type="protein sequence ID" value="AFP42822.1"/>
    <property type="molecule type" value="Genomic_DNA"/>
</dbReference>
<dbReference type="RefSeq" id="WP_011731373.1">
    <property type="nucleotide sequence ID" value="NZ_SIJM01000054.1"/>
</dbReference>
<dbReference type="RefSeq" id="YP_890786.1">
    <property type="nucleotide sequence ID" value="NC_008596.1"/>
</dbReference>
<dbReference type="SMR" id="A0R6J8"/>
<dbReference type="STRING" id="246196.MSMEG_6574"/>
<dbReference type="PaxDb" id="246196-MSMEI_6396"/>
<dbReference type="KEGG" id="msb:LJ00_32495"/>
<dbReference type="KEGG" id="msg:MSMEI_6396"/>
<dbReference type="KEGG" id="msm:MSMEG_6574"/>
<dbReference type="PATRIC" id="fig|246196.19.peg.6399"/>
<dbReference type="eggNOG" id="COG4044">
    <property type="taxonomic scope" value="Bacteria"/>
</dbReference>
<dbReference type="OrthoDB" id="4804006at2"/>
<dbReference type="Proteomes" id="UP000000757">
    <property type="component" value="Chromosome"/>
</dbReference>
<dbReference type="Proteomes" id="UP000006158">
    <property type="component" value="Chromosome"/>
</dbReference>
<dbReference type="GO" id="GO:0020037">
    <property type="term" value="F:heme binding"/>
    <property type="evidence" value="ECO:0007669"/>
    <property type="project" value="UniProtKB-UniRule"/>
</dbReference>
<dbReference type="GO" id="GO:0046872">
    <property type="term" value="F:metal ion binding"/>
    <property type="evidence" value="ECO:0007669"/>
    <property type="project" value="UniProtKB-KW"/>
</dbReference>
<dbReference type="GO" id="GO:0062213">
    <property type="term" value="F:peroxynitrite isomerase activity"/>
    <property type="evidence" value="ECO:0007669"/>
    <property type="project" value="UniProtKB-UniRule"/>
</dbReference>
<dbReference type="CDD" id="cd07828">
    <property type="entry name" value="lipocalin_heme-bd-THAP4-like"/>
    <property type="match status" value="1"/>
</dbReference>
<dbReference type="Gene3D" id="2.40.128.20">
    <property type="match status" value="1"/>
</dbReference>
<dbReference type="HAMAP" id="MF_01297">
    <property type="entry name" value="nitrobindin"/>
    <property type="match status" value="1"/>
</dbReference>
<dbReference type="InterPro" id="IPR012674">
    <property type="entry name" value="Calycin"/>
</dbReference>
<dbReference type="InterPro" id="IPR022939">
    <property type="entry name" value="Nb(III)_bact/plant"/>
</dbReference>
<dbReference type="InterPro" id="IPR045165">
    <property type="entry name" value="Nitrobindin"/>
</dbReference>
<dbReference type="InterPro" id="IPR054873">
    <property type="entry name" value="PeroxynitIsom"/>
</dbReference>
<dbReference type="InterPro" id="IPR014878">
    <property type="entry name" value="THAP4-like_heme-bd"/>
</dbReference>
<dbReference type="NCBIfam" id="NF045819">
    <property type="entry name" value="PeroxynitIsom"/>
    <property type="match status" value="1"/>
</dbReference>
<dbReference type="PANTHER" id="PTHR15854:SF4">
    <property type="entry name" value="PEROXYNITRITE ISOMERASE THAP4"/>
    <property type="match status" value="1"/>
</dbReference>
<dbReference type="PANTHER" id="PTHR15854">
    <property type="entry name" value="THAP4 PROTEIN"/>
    <property type="match status" value="1"/>
</dbReference>
<dbReference type="Pfam" id="PF08768">
    <property type="entry name" value="THAP4_heme-bd"/>
    <property type="match status" value="1"/>
</dbReference>
<dbReference type="SUPFAM" id="SSF50814">
    <property type="entry name" value="Lipocalins"/>
    <property type="match status" value="1"/>
</dbReference>
<comment type="function">
    <text evidence="1">Heme-binding protein able to scavenge peroxynitrite and to protect free L-tyrosine against peroxynitrite-mediated nitration, by acting as a peroxynitrite isomerase that converts peroxynitrite to nitrate. Therefore, this protein likely plays a role in peroxynitrite sensing and in the detoxification of reactive nitrogen and oxygen species (RNS and ROS, respectively). Is able to bind nitric oxide (NO) in vitro, but may act as a sensor of peroxynitrite levels in vivo.</text>
</comment>
<comment type="catalytic activity">
    <reaction evidence="1">
        <text>peroxynitrite = nitrate</text>
        <dbReference type="Rhea" id="RHEA:63116"/>
        <dbReference type="ChEBI" id="CHEBI:17632"/>
        <dbReference type="ChEBI" id="CHEBI:25941"/>
    </reaction>
    <physiologicalReaction direction="left-to-right" evidence="1">
        <dbReference type="Rhea" id="RHEA:63117"/>
    </physiologicalReaction>
</comment>
<comment type="cofactor">
    <cofactor evidence="1">
        <name>heme b</name>
        <dbReference type="ChEBI" id="CHEBI:60344"/>
    </cofactor>
    <text evidence="1">Binds 1 heme b group per subunit, that coordinates a highly solvent-exposed Fe(III) atom.</text>
</comment>
<comment type="pathway">
    <text evidence="1">Nitrogen metabolism.</text>
</comment>
<comment type="subunit">
    <text evidence="1">Homodimer.</text>
</comment>
<comment type="domain">
    <text evidence="1">Forms a 10-stranded antiparallel beta-barrel structure able to accommodate a hydrophobic ligand in its interior. In fact, this fold hosts the heme group, which is located in a wide surface cleft.</text>
</comment>
<comment type="similarity">
    <text evidence="1">Belongs to the nitrobindin family.</text>
</comment>
<gene>
    <name type="ordered locus">MSMEG_6574</name>
    <name type="ordered locus">MSMEI_6396</name>
</gene>
<protein>
    <recommendedName>
        <fullName>Peroxynitrite isomerase 1</fullName>
        <ecNumber evidence="1">5.99.-.-</ecNumber>
    </recommendedName>
    <alternativeName>
        <fullName>Ferric nitrobindin</fullName>
        <shortName>Nb(III)</shortName>
    </alternativeName>
</protein>
<reference key="1">
    <citation type="submission" date="2006-10" db="EMBL/GenBank/DDBJ databases">
        <authorList>
            <person name="Fleischmann R.D."/>
            <person name="Dodson R.J."/>
            <person name="Haft D.H."/>
            <person name="Merkel J.S."/>
            <person name="Nelson W.C."/>
            <person name="Fraser C.M."/>
        </authorList>
    </citation>
    <scope>NUCLEOTIDE SEQUENCE [LARGE SCALE GENOMIC DNA]</scope>
    <source>
        <strain>ATCC 700084 / mc(2)155</strain>
    </source>
</reference>
<reference key="2">
    <citation type="journal article" date="2007" name="Genome Biol.">
        <title>Interrupted coding sequences in Mycobacterium smegmatis: authentic mutations or sequencing errors?</title>
        <authorList>
            <person name="Deshayes C."/>
            <person name="Perrodou E."/>
            <person name="Gallien S."/>
            <person name="Euphrasie D."/>
            <person name="Schaeffer C."/>
            <person name="Van-Dorsselaer A."/>
            <person name="Poch O."/>
            <person name="Lecompte O."/>
            <person name="Reyrat J.-M."/>
        </authorList>
    </citation>
    <scope>NUCLEOTIDE SEQUENCE [LARGE SCALE GENOMIC DNA]</scope>
    <source>
        <strain>ATCC 700084 / mc(2)155</strain>
    </source>
</reference>
<reference key="3">
    <citation type="journal article" date="2009" name="Genome Res.">
        <title>Ortho-proteogenomics: multiple proteomes investigation through orthology and a new MS-based protocol.</title>
        <authorList>
            <person name="Gallien S."/>
            <person name="Perrodou E."/>
            <person name="Carapito C."/>
            <person name="Deshayes C."/>
            <person name="Reyrat J.-M."/>
            <person name="Van Dorsselaer A."/>
            <person name="Poch O."/>
            <person name="Schaeffer C."/>
            <person name="Lecompte O."/>
        </authorList>
    </citation>
    <scope>NUCLEOTIDE SEQUENCE [LARGE SCALE GENOMIC DNA]</scope>
    <source>
        <strain>ATCC 700084 / mc(2)155</strain>
    </source>
</reference>
<feature type="chain" id="PRO_0000356927" description="Peroxynitrite isomerase 1">
    <location>
        <begin position="1"/>
        <end position="161"/>
    </location>
</feature>
<feature type="short sequence motif" description="GXWXGXG" evidence="1">
    <location>
        <begin position="16"/>
        <end position="22"/>
    </location>
</feature>
<feature type="binding site" description="axial binding residue" evidence="1">
    <location>
        <position position="151"/>
    </location>
    <ligand>
        <name>heme b</name>
        <dbReference type="ChEBI" id="CHEBI:60344"/>
    </ligand>
    <ligandPart>
        <name>Fe</name>
        <dbReference type="ChEBI" id="CHEBI:18248"/>
    </ligandPart>
</feature>
<sequence>MIDLHPNIAPLAPLLGTWAGPGAGEYPTIQSFEYLEEITFGHVGKPFLTYQQRTKARDDGRPLHAEVGYIRVPAPDRVEWVLAHPTGITEIQEGTLTVGGDRITMDVKATTIGLTASAKNVTALARSFRITGDELTYTLQMGAVGQPLQHHLAATLRRTPA</sequence>
<keyword id="KW-0349">Heme</keyword>
<keyword id="KW-0408">Iron</keyword>
<keyword id="KW-0413">Isomerase</keyword>
<keyword id="KW-0479">Metal-binding</keyword>
<keyword id="KW-1185">Reference proteome</keyword>
<accession>A0R6J8</accession>
<accession>I7GB36</accession>
<organism>
    <name type="scientific">Mycolicibacterium smegmatis (strain ATCC 700084 / mc(2)155)</name>
    <name type="common">Mycobacterium smegmatis</name>
    <dbReference type="NCBI Taxonomy" id="246196"/>
    <lineage>
        <taxon>Bacteria</taxon>
        <taxon>Bacillati</taxon>
        <taxon>Actinomycetota</taxon>
        <taxon>Actinomycetes</taxon>
        <taxon>Mycobacteriales</taxon>
        <taxon>Mycobacteriaceae</taxon>
        <taxon>Mycolicibacterium</taxon>
    </lineage>
</organism>
<proteinExistence type="inferred from homology"/>